<gene>
    <name evidence="1" type="primary">lexA</name>
    <name type="ordered locus">Anae109_2104</name>
</gene>
<feature type="chain" id="PRO_1000001256" description="LexA repressor">
    <location>
        <begin position="1"/>
        <end position="231"/>
    </location>
</feature>
<feature type="DNA-binding region" description="H-T-H motif" evidence="1">
    <location>
        <begin position="28"/>
        <end position="48"/>
    </location>
</feature>
<feature type="active site" description="For autocatalytic cleavage activity" evidence="1">
    <location>
        <position position="149"/>
    </location>
</feature>
<feature type="active site" description="For autocatalytic cleavage activity" evidence="1">
    <location>
        <position position="186"/>
    </location>
</feature>
<feature type="site" description="Cleavage; by autolysis" evidence="1">
    <location>
        <begin position="113"/>
        <end position="114"/>
    </location>
</feature>
<comment type="function">
    <text evidence="1">Represses a number of genes involved in the response to DNA damage (SOS response), including recA and lexA. In the presence of single-stranded DNA, RecA interacts with LexA causing an autocatalytic cleavage which disrupts the DNA-binding part of LexA, leading to derepression of the SOS regulon and eventually DNA repair.</text>
</comment>
<comment type="catalytic activity">
    <reaction evidence="1">
        <text>Hydrolysis of Ala-|-Gly bond in repressor LexA.</text>
        <dbReference type="EC" id="3.4.21.88"/>
    </reaction>
</comment>
<comment type="subunit">
    <text evidence="1">Homodimer.</text>
</comment>
<comment type="similarity">
    <text evidence="1">Belongs to the peptidase S24 family.</text>
</comment>
<evidence type="ECO:0000255" key="1">
    <source>
        <dbReference type="HAMAP-Rule" id="MF_00015"/>
    </source>
</evidence>
<accession>A7HC61</accession>
<dbReference type="EC" id="3.4.21.88" evidence="1"/>
<dbReference type="EMBL" id="CP000769">
    <property type="protein sequence ID" value="ABS26307.1"/>
    <property type="molecule type" value="Genomic_DNA"/>
</dbReference>
<dbReference type="RefSeq" id="WP_012096887.1">
    <property type="nucleotide sequence ID" value="NC_009675.1"/>
</dbReference>
<dbReference type="SMR" id="A7HC61"/>
<dbReference type="STRING" id="404589.Anae109_2104"/>
<dbReference type="MEROPS" id="S24.001"/>
<dbReference type="KEGG" id="afw:Anae109_2104"/>
<dbReference type="eggNOG" id="COG1974">
    <property type="taxonomic scope" value="Bacteria"/>
</dbReference>
<dbReference type="HOGENOM" id="CLU_066192_45_1_7"/>
<dbReference type="OrthoDB" id="9802364at2"/>
<dbReference type="Proteomes" id="UP000006382">
    <property type="component" value="Chromosome"/>
</dbReference>
<dbReference type="GO" id="GO:0003677">
    <property type="term" value="F:DNA binding"/>
    <property type="evidence" value="ECO:0007669"/>
    <property type="project" value="UniProtKB-UniRule"/>
</dbReference>
<dbReference type="GO" id="GO:0004252">
    <property type="term" value="F:serine-type endopeptidase activity"/>
    <property type="evidence" value="ECO:0007669"/>
    <property type="project" value="UniProtKB-UniRule"/>
</dbReference>
<dbReference type="GO" id="GO:0006281">
    <property type="term" value="P:DNA repair"/>
    <property type="evidence" value="ECO:0007669"/>
    <property type="project" value="UniProtKB-UniRule"/>
</dbReference>
<dbReference type="GO" id="GO:0006260">
    <property type="term" value="P:DNA replication"/>
    <property type="evidence" value="ECO:0007669"/>
    <property type="project" value="UniProtKB-UniRule"/>
</dbReference>
<dbReference type="GO" id="GO:0045892">
    <property type="term" value="P:negative regulation of DNA-templated transcription"/>
    <property type="evidence" value="ECO:0007669"/>
    <property type="project" value="UniProtKB-UniRule"/>
</dbReference>
<dbReference type="GO" id="GO:0006508">
    <property type="term" value="P:proteolysis"/>
    <property type="evidence" value="ECO:0007669"/>
    <property type="project" value="InterPro"/>
</dbReference>
<dbReference type="GO" id="GO:0009432">
    <property type="term" value="P:SOS response"/>
    <property type="evidence" value="ECO:0007669"/>
    <property type="project" value="UniProtKB-UniRule"/>
</dbReference>
<dbReference type="CDD" id="cd06529">
    <property type="entry name" value="S24_LexA-like"/>
    <property type="match status" value="1"/>
</dbReference>
<dbReference type="FunFam" id="1.10.10.10:FF:000009">
    <property type="entry name" value="LexA repressor"/>
    <property type="match status" value="1"/>
</dbReference>
<dbReference type="FunFam" id="2.10.109.10:FF:000001">
    <property type="entry name" value="LexA repressor"/>
    <property type="match status" value="1"/>
</dbReference>
<dbReference type="Gene3D" id="2.10.109.10">
    <property type="entry name" value="Umud Fragment, subunit A"/>
    <property type="match status" value="1"/>
</dbReference>
<dbReference type="Gene3D" id="1.10.10.10">
    <property type="entry name" value="Winged helix-like DNA-binding domain superfamily/Winged helix DNA-binding domain"/>
    <property type="match status" value="1"/>
</dbReference>
<dbReference type="HAMAP" id="MF_00015">
    <property type="entry name" value="LexA"/>
    <property type="match status" value="1"/>
</dbReference>
<dbReference type="InterPro" id="IPR006200">
    <property type="entry name" value="LexA"/>
</dbReference>
<dbReference type="InterPro" id="IPR039418">
    <property type="entry name" value="LexA-like"/>
</dbReference>
<dbReference type="InterPro" id="IPR036286">
    <property type="entry name" value="LexA/Signal_pep-like_sf"/>
</dbReference>
<dbReference type="InterPro" id="IPR006199">
    <property type="entry name" value="LexA_DNA-bd_dom"/>
</dbReference>
<dbReference type="InterPro" id="IPR050077">
    <property type="entry name" value="LexA_repressor"/>
</dbReference>
<dbReference type="InterPro" id="IPR006197">
    <property type="entry name" value="Peptidase_S24_LexA"/>
</dbReference>
<dbReference type="InterPro" id="IPR015927">
    <property type="entry name" value="Peptidase_S24_S26A/B/C"/>
</dbReference>
<dbReference type="InterPro" id="IPR036388">
    <property type="entry name" value="WH-like_DNA-bd_sf"/>
</dbReference>
<dbReference type="InterPro" id="IPR036390">
    <property type="entry name" value="WH_DNA-bd_sf"/>
</dbReference>
<dbReference type="NCBIfam" id="TIGR00498">
    <property type="entry name" value="lexA"/>
    <property type="match status" value="1"/>
</dbReference>
<dbReference type="PANTHER" id="PTHR33516">
    <property type="entry name" value="LEXA REPRESSOR"/>
    <property type="match status" value="1"/>
</dbReference>
<dbReference type="PANTHER" id="PTHR33516:SF2">
    <property type="entry name" value="LEXA REPRESSOR-RELATED"/>
    <property type="match status" value="1"/>
</dbReference>
<dbReference type="Pfam" id="PF01726">
    <property type="entry name" value="LexA_DNA_bind"/>
    <property type="match status" value="1"/>
</dbReference>
<dbReference type="Pfam" id="PF00717">
    <property type="entry name" value="Peptidase_S24"/>
    <property type="match status" value="1"/>
</dbReference>
<dbReference type="PRINTS" id="PR00726">
    <property type="entry name" value="LEXASERPTASE"/>
</dbReference>
<dbReference type="SUPFAM" id="SSF51306">
    <property type="entry name" value="LexA/Signal peptidase"/>
    <property type="match status" value="1"/>
</dbReference>
<dbReference type="SUPFAM" id="SSF46785">
    <property type="entry name" value="Winged helix' DNA-binding domain"/>
    <property type="match status" value="1"/>
</dbReference>
<name>LEXA_ANADF</name>
<organism>
    <name type="scientific">Anaeromyxobacter sp. (strain Fw109-5)</name>
    <dbReference type="NCBI Taxonomy" id="404589"/>
    <lineage>
        <taxon>Bacteria</taxon>
        <taxon>Pseudomonadati</taxon>
        <taxon>Myxococcota</taxon>
        <taxon>Myxococcia</taxon>
        <taxon>Myxococcales</taxon>
        <taxon>Cystobacterineae</taxon>
        <taxon>Anaeromyxobacteraceae</taxon>
        <taxon>Anaeromyxobacter</taxon>
    </lineage>
</organism>
<proteinExistence type="inferred from homology"/>
<reference key="1">
    <citation type="journal article" date="2015" name="Genome Announc.">
        <title>Complete genome sequence of Anaeromyxobacter sp. Fw109-5, an anaerobic, metal-reducing bacterium isolated from a contaminated subsurface environment.</title>
        <authorList>
            <person name="Hwang C."/>
            <person name="Copeland A."/>
            <person name="Lucas S."/>
            <person name="Lapidus A."/>
            <person name="Barry K."/>
            <person name="Glavina Del Rio T."/>
            <person name="Dalin E."/>
            <person name="Tice H."/>
            <person name="Pitluck S."/>
            <person name="Sims D."/>
            <person name="Brettin T."/>
            <person name="Bruce D.C."/>
            <person name="Detter J.C."/>
            <person name="Han C.S."/>
            <person name="Schmutz J."/>
            <person name="Larimer F.W."/>
            <person name="Land M.L."/>
            <person name="Hauser L.J."/>
            <person name="Kyrpides N."/>
            <person name="Lykidis A."/>
            <person name="Richardson P."/>
            <person name="Belieav A."/>
            <person name="Sanford R.A."/>
            <person name="Loeffler F.E."/>
            <person name="Fields M.W."/>
        </authorList>
    </citation>
    <scope>NUCLEOTIDE SEQUENCE [LARGE SCALE GENOMIC DNA]</scope>
    <source>
        <strain>Fw109-5</strain>
    </source>
</reference>
<protein>
    <recommendedName>
        <fullName evidence="1">LexA repressor</fullName>
        <ecNumber evidence="1">3.4.21.88</ecNumber>
    </recommendedName>
</protein>
<sequence length="231" mass="25435">MDALTDRQLEVLRFIARQIEDNGYPPTIREIGEALDIRSTNGVNDHLKALERKGFLTRDPVKSRALIPTPQAREVLGGGARASNVVPFTRTPAVGLKPAGRLVEIPILGRVAAGQPILAQERVEDTVQVDSFLLGTNKKVYGLRVQGDSMIGDGILPGDYIFVKKQLHAEDGDIVVAMIDEEATVKRVYFEGDRVRFQPSNPRMAPIYVRGSDFRTTMILGVVVGVYRKLG</sequence>
<keyword id="KW-0068">Autocatalytic cleavage</keyword>
<keyword id="KW-0227">DNA damage</keyword>
<keyword id="KW-0234">DNA repair</keyword>
<keyword id="KW-0235">DNA replication</keyword>
<keyword id="KW-0238">DNA-binding</keyword>
<keyword id="KW-0378">Hydrolase</keyword>
<keyword id="KW-1185">Reference proteome</keyword>
<keyword id="KW-0678">Repressor</keyword>
<keyword id="KW-0742">SOS response</keyword>
<keyword id="KW-0804">Transcription</keyword>
<keyword id="KW-0805">Transcription regulation</keyword>